<reference key="1">
    <citation type="journal article" date="2008" name="Genomics">
        <title>Evolution in the laboratory: the genome of Halobacterium salinarum strain R1 compared to that of strain NRC-1.</title>
        <authorList>
            <person name="Pfeiffer F."/>
            <person name="Schuster S.C."/>
            <person name="Broicher A."/>
            <person name="Falb M."/>
            <person name="Palm P."/>
            <person name="Rodewald K."/>
            <person name="Ruepp A."/>
            <person name="Soppa J."/>
            <person name="Tittor J."/>
            <person name="Oesterhelt D."/>
        </authorList>
    </citation>
    <scope>NUCLEOTIDE SEQUENCE [LARGE SCALE GENOMIC DNA]</scope>
    <source>
        <strain>ATCC 29341 / DSM 671 / R1</strain>
    </source>
</reference>
<evidence type="ECO:0000255" key="1">
    <source>
        <dbReference type="HAMAP-Rule" id="MF_00372"/>
    </source>
</evidence>
<proteinExistence type="inferred from homology"/>
<keyword id="KW-0963">Cytoplasm</keyword>
<keyword id="KW-0369">Histidine metabolism</keyword>
<keyword id="KW-0378">Hydrolase</keyword>
<keyword id="KW-0408">Iron</keyword>
<keyword id="KW-0479">Metal-binding</keyword>
<keyword id="KW-0862">Zinc</keyword>
<gene>
    <name evidence="1" type="primary">hutI</name>
    <name type="ordered locus">OE_2738F</name>
</gene>
<feature type="chain" id="PRO_1000121543" description="Imidazolonepropionase">
    <location>
        <begin position="1"/>
        <end position="417"/>
    </location>
</feature>
<feature type="binding site" evidence="1">
    <location>
        <position position="77"/>
    </location>
    <ligand>
        <name>Fe(3+)</name>
        <dbReference type="ChEBI" id="CHEBI:29034"/>
    </ligand>
</feature>
<feature type="binding site" evidence="1">
    <location>
        <position position="77"/>
    </location>
    <ligand>
        <name>Zn(2+)</name>
        <dbReference type="ChEBI" id="CHEBI:29105"/>
    </ligand>
</feature>
<feature type="binding site" evidence="1">
    <location>
        <position position="79"/>
    </location>
    <ligand>
        <name>Fe(3+)</name>
        <dbReference type="ChEBI" id="CHEBI:29034"/>
    </ligand>
</feature>
<feature type="binding site" evidence="1">
    <location>
        <position position="79"/>
    </location>
    <ligand>
        <name>Zn(2+)</name>
        <dbReference type="ChEBI" id="CHEBI:29105"/>
    </ligand>
</feature>
<feature type="binding site" evidence="1">
    <location>
        <position position="86"/>
    </location>
    <ligand>
        <name>4-imidazolone-5-propanoate</name>
        <dbReference type="ChEBI" id="CHEBI:77893"/>
    </ligand>
</feature>
<feature type="binding site" evidence="1">
    <location>
        <position position="149"/>
    </location>
    <ligand>
        <name>4-imidazolone-5-propanoate</name>
        <dbReference type="ChEBI" id="CHEBI:77893"/>
    </ligand>
</feature>
<feature type="binding site" evidence="1">
    <location>
        <position position="149"/>
    </location>
    <ligand>
        <name>N-formimidoyl-L-glutamate</name>
        <dbReference type="ChEBI" id="CHEBI:58928"/>
    </ligand>
</feature>
<feature type="binding site" evidence="1">
    <location>
        <position position="182"/>
    </location>
    <ligand>
        <name>4-imidazolone-5-propanoate</name>
        <dbReference type="ChEBI" id="CHEBI:77893"/>
    </ligand>
</feature>
<feature type="binding site" evidence="1">
    <location>
        <position position="244"/>
    </location>
    <ligand>
        <name>Fe(3+)</name>
        <dbReference type="ChEBI" id="CHEBI:29034"/>
    </ligand>
</feature>
<feature type="binding site" evidence="1">
    <location>
        <position position="244"/>
    </location>
    <ligand>
        <name>Zn(2+)</name>
        <dbReference type="ChEBI" id="CHEBI:29105"/>
    </ligand>
</feature>
<feature type="binding site" evidence="1">
    <location>
        <position position="247"/>
    </location>
    <ligand>
        <name>4-imidazolone-5-propanoate</name>
        <dbReference type="ChEBI" id="CHEBI:77893"/>
    </ligand>
</feature>
<feature type="binding site" evidence="1">
    <location>
        <position position="323"/>
    </location>
    <ligand>
        <name>Fe(3+)</name>
        <dbReference type="ChEBI" id="CHEBI:29034"/>
    </ligand>
</feature>
<feature type="binding site" evidence="1">
    <location>
        <position position="323"/>
    </location>
    <ligand>
        <name>Zn(2+)</name>
        <dbReference type="ChEBI" id="CHEBI:29105"/>
    </ligand>
</feature>
<feature type="binding site" evidence="1">
    <location>
        <position position="325"/>
    </location>
    <ligand>
        <name>N-formimidoyl-L-glutamate</name>
        <dbReference type="ChEBI" id="CHEBI:58928"/>
    </ligand>
</feature>
<name>HUTI_HALS3</name>
<sequence>MSSLDAVVHGARELVVGPAAGGDTLETHADGAVAVVDGAVAAVGDTADVLAAYPAENATTAIDATGKTVLPGFVDPHTHALFAGDRSDEFAAKLRGKPYQEILAEGGGILRTVDAVRAASDAALVANLTAQLDVMLAHGTTTAEVKTGYGLDTETECRMLDAIAAAAAEHPVDVVTTFLGAHAVPDDTDADAYVDAVIDDQLPAAANGPARFCDVFCEADVFTVEQSRRILDAGREHGLAPKLHAEEFTRLGGAQLAADLGATSADHLLHATPEDAAALADAGVTPVLLPATAFVLDEAYADPQQFLAAADNRTGAPVALGTDLNPNCYTHSMGFVVSLACNGMRMAPADAVLAATAWAASALDRGRDGTGTLREGTDGDVLVVDAPSHVHLPYNPGVNNVEAVLTDGTVAVGGGGA</sequence>
<organism>
    <name type="scientific">Halobacterium salinarum (strain ATCC 29341 / DSM 671 / R1)</name>
    <dbReference type="NCBI Taxonomy" id="478009"/>
    <lineage>
        <taxon>Archaea</taxon>
        <taxon>Methanobacteriati</taxon>
        <taxon>Methanobacteriota</taxon>
        <taxon>Stenosarchaea group</taxon>
        <taxon>Halobacteria</taxon>
        <taxon>Halobacteriales</taxon>
        <taxon>Halobacteriaceae</taxon>
        <taxon>Halobacterium</taxon>
        <taxon>Halobacterium salinarum NRC-34001</taxon>
    </lineage>
</organism>
<comment type="function">
    <text evidence="1">Catalyzes the hydrolytic cleavage of the carbon-nitrogen bond in imidazolone-5-propanoate to yield N-formimidoyl-L-glutamate. It is the third step in the universal histidine degradation pathway.</text>
</comment>
<comment type="catalytic activity">
    <reaction evidence="1">
        <text>4-imidazolone-5-propanoate + H2O = N-formimidoyl-L-glutamate</text>
        <dbReference type="Rhea" id="RHEA:23660"/>
        <dbReference type="ChEBI" id="CHEBI:15377"/>
        <dbReference type="ChEBI" id="CHEBI:58928"/>
        <dbReference type="ChEBI" id="CHEBI:77893"/>
        <dbReference type="EC" id="3.5.2.7"/>
    </reaction>
</comment>
<comment type="cofactor">
    <cofactor evidence="1">
        <name>Zn(2+)</name>
        <dbReference type="ChEBI" id="CHEBI:29105"/>
    </cofactor>
    <cofactor evidence="1">
        <name>Fe(3+)</name>
        <dbReference type="ChEBI" id="CHEBI:29034"/>
    </cofactor>
    <text evidence="1">Binds 1 zinc or iron ion per subunit.</text>
</comment>
<comment type="pathway">
    <text evidence="1">Amino-acid degradation; L-histidine degradation into L-glutamate; N-formimidoyl-L-glutamate from L-histidine: step 3/3.</text>
</comment>
<comment type="subcellular location">
    <subcellularLocation>
        <location evidence="1">Cytoplasm</location>
    </subcellularLocation>
</comment>
<comment type="similarity">
    <text evidence="1">Belongs to the metallo-dependent hydrolases superfamily. HutI family.</text>
</comment>
<protein>
    <recommendedName>
        <fullName evidence="1">Imidazolonepropionase</fullName>
        <ecNumber evidence="1">3.5.2.7</ecNumber>
    </recommendedName>
    <alternativeName>
        <fullName evidence="1">Imidazolone-5-propionate hydrolase</fullName>
    </alternativeName>
</protein>
<accession>B0R543</accession>
<dbReference type="EC" id="3.5.2.7" evidence="1"/>
<dbReference type="EMBL" id="AM774415">
    <property type="protein sequence ID" value="CAP13858.1"/>
    <property type="molecule type" value="Genomic_DNA"/>
</dbReference>
<dbReference type="RefSeq" id="WP_010902875.1">
    <property type="nucleotide sequence ID" value="NC_010364.1"/>
</dbReference>
<dbReference type="SMR" id="B0R543"/>
<dbReference type="EnsemblBacteria" id="CAP13858">
    <property type="protein sequence ID" value="CAP13858"/>
    <property type="gene ID" value="OE_2738F"/>
</dbReference>
<dbReference type="GeneID" id="68693977"/>
<dbReference type="KEGG" id="hsl:OE_2738F"/>
<dbReference type="HOGENOM" id="CLU_041647_0_1_2"/>
<dbReference type="PhylomeDB" id="B0R543"/>
<dbReference type="UniPathway" id="UPA00379">
    <property type="reaction ID" value="UER00551"/>
</dbReference>
<dbReference type="Proteomes" id="UP000001321">
    <property type="component" value="Chromosome"/>
</dbReference>
<dbReference type="GO" id="GO:0005737">
    <property type="term" value="C:cytoplasm"/>
    <property type="evidence" value="ECO:0007669"/>
    <property type="project" value="UniProtKB-SubCell"/>
</dbReference>
<dbReference type="GO" id="GO:0050480">
    <property type="term" value="F:imidazolonepropionase activity"/>
    <property type="evidence" value="ECO:0007669"/>
    <property type="project" value="UniProtKB-UniRule"/>
</dbReference>
<dbReference type="GO" id="GO:0005506">
    <property type="term" value="F:iron ion binding"/>
    <property type="evidence" value="ECO:0007669"/>
    <property type="project" value="UniProtKB-UniRule"/>
</dbReference>
<dbReference type="GO" id="GO:0008270">
    <property type="term" value="F:zinc ion binding"/>
    <property type="evidence" value="ECO:0007669"/>
    <property type="project" value="UniProtKB-UniRule"/>
</dbReference>
<dbReference type="GO" id="GO:0019556">
    <property type="term" value="P:L-histidine catabolic process to glutamate and formamide"/>
    <property type="evidence" value="ECO:0007669"/>
    <property type="project" value="UniProtKB-UniPathway"/>
</dbReference>
<dbReference type="GO" id="GO:0019557">
    <property type="term" value="P:L-histidine catabolic process to glutamate and formate"/>
    <property type="evidence" value="ECO:0007669"/>
    <property type="project" value="UniProtKB-UniPathway"/>
</dbReference>
<dbReference type="FunFam" id="3.20.20.140:FF:000007">
    <property type="entry name" value="Imidazolonepropionase"/>
    <property type="match status" value="1"/>
</dbReference>
<dbReference type="Gene3D" id="3.20.20.140">
    <property type="entry name" value="Metal-dependent hydrolases"/>
    <property type="match status" value="1"/>
</dbReference>
<dbReference type="Gene3D" id="2.30.40.10">
    <property type="entry name" value="Urease, subunit C, domain 1"/>
    <property type="match status" value="1"/>
</dbReference>
<dbReference type="HAMAP" id="MF_00372">
    <property type="entry name" value="HutI"/>
    <property type="match status" value="1"/>
</dbReference>
<dbReference type="InterPro" id="IPR006680">
    <property type="entry name" value="Amidohydro-rel"/>
</dbReference>
<dbReference type="InterPro" id="IPR005920">
    <property type="entry name" value="HutI"/>
</dbReference>
<dbReference type="InterPro" id="IPR011059">
    <property type="entry name" value="Metal-dep_hydrolase_composite"/>
</dbReference>
<dbReference type="InterPro" id="IPR032466">
    <property type="entry name" value="Metal_Hydrolase"/>
</dbReference>
<dbReference type="NCBIfam" id="TIGR01224">
    <property type="entry name" value="hutI"/>
    <property type="match status" value="1"/>
</dbReference>
<dbReference type="PANTHER" id="PTHR42752">
    <property type="entry name" value="IMIDAZOLONEPROPIONASE"/>
    <property type="match status" value="1"/>
</dbReference>
<dbReference type="PANTHER" id="PTHR42752:SF1">
    <property type="entry name" value="IMIDAZOLONEPROPIONASE-RELATED"/>
    <property type="match status" value="1"/>
</dbReference>
<dbReference type="Pfam" id="PF01979">
    <property type="entry name" value="Amidohydro_1"/>
    <property type="match status" value="1"/>
</dbReference>
<dbReference type="SUPFAM" id="SSF51338">
    <property type="entry name" value="Composite domain of metallo-dependent hydrolases"/>
    <property type="match status" value="1"/>
</dbReference>
<dbReference type="SUPFAM" id="SSF51556">
    <property type="entry name" value="Metallo-dependent hydrolases"/>
    <property type="match status" value="1"/>
</dbReference>